<comment type="function">
    <text evidence="1">Catalyzes the ATP-dependent ligation of L-glutamate and L-cysteine and participates in the first and rate-limiting step in glutathione biosynthesis.</text>
</comment>
<comment type="catalytic activity">
    <reaction evidence="1">
        <text>L-cysteine + L-glutamate + ATP = gamma-L-glutamyl-L-cysteine + ADP + phosphate + H(+)</text>
        <dbReference type="Rhea" id="RHEA:13285"/>
        <dbReference type="ChEBI" id="CHEBI:15378"/>
        <dbReference type="ChEBI" id="CHEBI:29985"/>
        <dbReference type="ChEBI" id="CHEBI:30616"/>
        <dbReference type="ChEBI" id="CHEBI:35235"/>
        <dbReference type="ChEBI" id="CHEBI:43474"/>
        <dbReference type="ChEBI" id="CHEBI:58173"/>
        <dbReference type="ChEBI" id="CHEBI:456216"/>
        <dbReference type="EC" id="6.3.2.2"/>
    </reaction>
    <physiologicalReaction direction="left-to-right" evidence="1">
        <dbReference type="Rhea" id="RHEA:13286"/>
    </physiologicalReaction>
</comment>
<comment type="catalytic activity">
    <reaction evidence="1">
        <text>(2S)-2-aminobutanoate + L-glutamate + ATP = gamma-L-glutamyl-(2S)-2-aminobutanoate + ADP + phosphate + H(+)</text>
        <dbReference type="Rhea" id="RHEA:72067"/>
        <dbReference type="ChEBI" id="CHEBI:15378"/>
        <dbReference type="ChEBI" id="CHEBI:29985"/>
        <dbReference type="ChEBI" id="CHEBI:30616"/>
        <dbReference type="ChEBI" id="CHEBI:43474"/>
        <dbReference type="ChEBI" id="CHEBI:74359"/>
        <dbReference type="ChEBI" id="CHEBI:189406"/>
        <dbReference type="ChEBI" id="CHEBI:456216"/>
    </reaction>
</comment>
<comment type="activity regulation">
    <text>Feedback inhibition by glutathione.</text>
</comment>
<comment type="pathway">
    <text evidence="1">Sulfur metabolism; glutathione biosynthesis; glutathione from L-cysteine and L-glutamate: step 1/2.</text>
</comment>
<comment type="subunit">
    <text>Heterodimer of a catalytic heavy chain and a regulatory light chain.</text>
</comment>
<comment type="tissue specificity">
    <text>Most abundant in kidney. Also found in liver and testis.</text>
</comment>
<comment type="similarity">
    <text evidence="2">Belongs to the glutamate--cysteine ligase type 3 family.</text>
</comment>
<dbReference type="EC" id="6.3.2.2" evidence="1"/>
<dbReference type="EMBL" id="J05181">
    <property type="protein sequence ID" value="AAA41208.1"/>
    <property type="molecule type" value="mRNA"/>
</dbReference>
<dbReference type="EMBL" id="BC081702">
    <property type="protein sequence ID" value="AAH81702.1"/>
    <property type="molecule type" value="mRNA"/>
</dbReference>
<dbReference type="PIR" id="A35015">
    <property type="entry name" value="A35015"/>
</dbReference>
<dbReference type="RefSeq" id="NP_036947.1">
    <property type="nucleotide sequence ID" value="NM_012815.2"/>
</dbReference>
<dbReference type="SMR" id="P19468"/>
<dbReference type="BioGRID" id="247323">
    <property type="interactions" value="1"/>
</dbReference>
<dbReference type="CORUM" id="P19468"/>
<dbReference type="FunCoup" id="P19468">
    <property type="interactions" value="1852"/>
</dbReference>
<dbReference type="STRING" id="10116.ENSRNOP00000035540"/>
<dbReference type="BindingDB" id="P19468"/>
<dbReference type="ChEMBL" id="CHEMBL2366469"/>
<dbReference type="iPTMnet" id="P19468"/>
<dbReference type="PhosphoSitePlus" id="P19468"/>
<dbReference type="jPOST" id="P19468"/>
<dbReference type="PaxDb" id="10116-ENSRNOP00000035540"/>
<dbReference type="Ensembl" id="ENSRNOT00000033196.4">
    <property type="protein sequence ID" value="ENSRNOP00000035540.3"/>
    <property type="gene ID" value="ENSRNOG00000006302.5"/>
</dbReference>
<dbReference type="GeneID" id="25283"/>
<dbReference type="KEGG" id="rno:25283"/>
<dbReference type="UCSC" id="RGD:619868">
    <property type="organism name" value="rat"/>
</dbReference>
<dbReference type="AGR" id="RGD:619868"/>
<dbReference type="CTD" id="2729"/>
<dbReference type="RGD" id="619868">
    <property type="gene designation" value="Gclc"/>
</dbReference>
<dbReference type="eggNOG" id="KOG3754">
    <property type="taxonomic scope" value="Eukaryota"/>
</dbReference>
<dbReference type="GeneTree" id="ENSGT00390000011908"/>
<dbReference type="HOGENOM" id="CLU_010467_0_0_1"/>
<dbReference type="InParanoid" id="P19468"/>
<dbReference type="OMA" id="IAHMFIR"/>
<dbReference type="OrthoDB" id="7939818at2759"/>
<dbReference type="PhylomeDB" id="P19468"/>
<dbReference type="TreeFam" id="TF105644"/>
<dbReference type="BioCyc" id="MetaCyc:MONOMER-10024"/>
<dbReference type="BRENDA" id="6.3.2.2">
    <property type="organism ID" value="5301"/>
</dbReference>
<dbReference type="Reactome" id="R-RNO-174403">
    <property type="pathway name" value="Glutathione synthesis and recycling"/>
</dbReference>
<dbReference type="SABIO-RK" id="P19468"/>
<dbReference type="UniPathway" id="UPA00142">
    <property type="reaction ID" value="UER00209"/>
</dbReference>
<dbReference type="PRO" id="PR:P19468"/>
<dbReference type="Proteomes" id="UP000002494">
    <property type="component" value="Chromosome 8"/>
</dbReference>
<dbReference type="Bgee" id="ENSRNOG00000006302">
    <property type="expression patterns" value="Expressed in kidney and 20 other cell types or tissues"/>
</dbReference>
<dbReference type="GO" id="GO:0005829">
    <property type="term" value="C:cytosol"/>
    <property type="evidence" value="ECO:0000266"/>
    <property type="project" value="RGD"/>
</dbReference>
<dbReference type="GO" id="GO:0017109">
    <property type="term" value="C:glutamate-cysteine ligase complex"/>
    <property type="evidence" value="ECO:0000314"/>
    <property type="project" value="RGD"/>
</dbReference>
<dbReference type="GO" id="GO:0005739">
    <property type="term" value="C:mitochondrion"/>
    <property type="evidence" value="ECO:0007669"/>
    <property type="project" value="GOC"/>
</dbReference>
<dbReference type="GO" id="GO:0043531">
    <property type="term" value="F:ADP binding"/>
    <property type="evidence" value="ECO:0000250"/>
    <property type="project" value="UniProtKB"/>
</dbReference>
<dbReference type="GO" id="GO:0005524">
    <property type="term" value="F:ATP binding"/>
    <property type="evidence" value="ECO:0007669"/>
    <property type="project" value="UniProtKB-KW"/>
</dbReference>
<dbReference type="GO" id="GO:0016595">
    <property type="term" value="F:glutamate binding"/>
    <property type="evidence" value="ECO:0000250"/>
    <property type="project" value="UniProtKB"/>
</dbReference>
<dbReference type="GO" id="GO:0004357">
    <property type="term" value="F:glutamate-cysteine ligase activity"/>
    <property type="evidence" value="ECO:0000314"/>
    <property type="project" value="RGD"/>
</dbReference>
<dbReference type="GO" id="GO:0000287">
    <property type="term" value="F:magnesium ion binding"/>
    <property type="evidence" value="ECO:0000250"/>
    <property type="project" value="UniProtKB"/>
</dbReference>
<dbReference type="GO" id="GO:0044877">
    <property type="term" value="F:protein-containing complex binding"/>
    <property type="evidence" value="ECO:0000314"/>
    <property type="project" value="RGD"/>
</dbReference>
<dbReference type="GO" id="GO:0097746">
    <property type="term" value="P:blood vessel diameter maintenance"/>
    <property type="evidence" value="ECO:0000250"/>
    <property type="project" value="UniProtKB"/>
</dbReference>
<dbReference type="GO" id="GO:0045454">
    <property type="term" value="P:cell redox homeostasis"/>
    <property type="evidence" value="ECO:0000250"/>
    <property type="project" value="UniProtKB"/>
</dbReference>
<dbReference type="GO" id="GO:0044344">
    <property type="term" value="P:cellular response to fibroblast growth factor stimulus"/>
    <property type="evidence" value="ECO:0000270"/>
    <property type="project" value="RGD"/>
</dbReference>
<dbReference type="GO" id="GO:0071372">
    <property type="term" value="P:cellular response to follicle-stimulating hormone stimulus"/>
    <property type="evidence" value="ECO:0000270"/>
    <property type="project" value="RGD"/>
</dbReference>
<dbReference type="GO" id="GO:0071333">
    <property type="term" value="P:cellular response to glucose stimulus"/>
    <property type="evidence" value="ECO:0000270"/>
    <property type="project" value="RGD"/>
</dbReference>
<dbReference type="GO" id="GO:0035729">
    <property type="term" value="P:cellular response to hepatocyte growth factor stimulus"/>
    <property type="evidence" value="ECO:0000270"/>
    <property type="project" value="RGD"/>
</dbReference>
<dbReference type="GO" id="GO:0032869">
    <property type="term" value="P:cellular response to insulin stimulus"/>
    <property type="evidence" value="ECO:0000270"/>
    <property type="project" value="RGD"/>
</dbReference>
<dbReference type="GO" id="GO:0071260">
    <property type="term" value="P:cellular response to mechanical stimulus"/>
    <property type="evidence" value="ECO:0000270"/>
    <property type="project" value="RGD"/>
</dbReference>
<dbReference type="GO" id="GO:0097069">
    <property type="term" value="P:cellular response to thyroxine stimulus"/>
    <property type="evidence" value="ECO:0000270"/>
    <property type="project" value="RGD"/>
</dbReference>
<dbReference type="GO" id="GO:0006534">
    <property type="term" value="P:cysteine metabolic process"/>
    <property type="evidence" value="ECO:0000250"/>
    <property type="project" value="UniProtKB"/>
</dbReference>
<dbReference type="GO" id="GO:0006536">
    <property type="term" value="P:glutamate metabolic process"/>
    <property type="evidence" value="ECO:0000250"/>
    <property type="project" value="UniProtKB"/>
</dbReference>
<dbReference type="GO" id="GO:0006750">
    <property type="term" value="P:glutathione biosynthetic process"/>
    <property type="evidence" value="ECO:0000315"/>
    <property type="project" value="RGD"/>
</dbReference>
<dbReference type="GO" id="GO:0006749">
    <property type="term" value="P:glutathione metabolic process"/>
    <property type="evidence" value="ECO:0000266"/>
    <property type="project" value="RGD"/>
</dbReference>
<dbReference type="GO" id="GO:0019852">
    <property type="term" value="P:L-ascorbic acid metabolic process"/>
    <property type="evidence" value="ECO:0000266"/>
    <property type="project" value="RGD"/>
</dbReference>
<dbReference type="GO" id="GO:0043066">
    <property type="term" value="P:negative regulation of apoptotic process"/>
    <property type="evidence" value="ECO:0000250"/>
    <property type="project" value="UniProtKB"/>
</dbReference>
<dbReference type="GO" id="GO:0045892">
    <property type="term" value="P:negative regulation of DNA-templated transcription"/>
    <property type="evidence" value="ECO:0000250"/>
    <property type="project" value="UniProtKB"/>
</dbReference>
<dbReference type="GO" id="GO:2001237">
    <property type="term" value="P:negative regulation of extrinsic apoptotic signaling pathway"/>
    <property type="evidence" value="ECO:0000266"/>
    <property type="project" value="RGD"/>
</dbReference>
<dbReference type="GO" id="GO:2000490">
    <property type="term" value="P:negative regulation of hepatic stellate cell activation"/>
    <property type="evidence" value="ECO:0000315"/>
    <property type="project" value="RGD"/>
</dbReference>
<dbReference type="GO" id="GO:1901029">
    <property type="term" value="P:negative regulation of mitochondrial outer membrane permeabilization involved in apoptotic signaling pathway"/>
    <property type="evidence" value="ECO:0000266"/>
    <property type="project" value="RGD"/>
</dbReference>
<dbReference type="GO" id="GO:0043524">
    <property type="term" value="P:negative regulation of neuron apoptotic process"/>
    <property type="evidence" value="ECO:0000315"/>
    <property type="project" value="RGD"/>
</dbReference>
<dbReference type="GO" id="GO:0031397">
    <property type="term" value="P:negative regulation of protein ubiquitination"/>
    <property type="evidence" value="ECO:0000266"/>
    <property type="project" value="RGD"/>
</dbReference>
<dbReference type="GO" id="GO:0032436">
    <property type="term" value="P:positive regulation of proteasomal ubiquitin-dependent protein catabolic process"/>
    <property type="evidence" value="ECO:0000266"/>
    <property type="project" value="RGD"/>
</dbReference>
<dbReference type="GO" id="GO:0051900">
    <property type="term" value="P:regulation of mitochondrial depolarization"/>
    <property type="evidence" value="ECO:0000266"/>
    <property type="project" value="RGD"/>
</dbReference>
<dbReference type="GO" id="GO:0014823">
    <property type="term" value="P:response to activity"/>
    <property type="evidence" value="ECO:0000270"/>
    <property type="project" value="RGD"/>
</dbReference>
<dbReference type="GO" id="GO:0046685">
    <property type="term" value="P:response to arsenic-containing substance"/>
    <property type="evidence" value="ECO:0000266"/>
    <property type="project" value="RGD"/>
</dbReference>
<dbReference type="GO" id="GO:0046686">
    <property type="term" value="P:response to cadmium ion"/>
    <property type="evidence" value="ECO:0000270"/>
    <property type="project" value="RGD"/>
</dbReference>
<dbReference type="GO" id="GO:0009408">
    <property type="term" value="P:response to heat"/>
    <property type="evidence" value="ECO:0000250"/>
    <property type="project" value="UniProtKB"/>
</dbReference>
<dbReference type="GO" id="GO:0009725">
    <property type="term" value="P:response to hormone"/>
    <property type="evidence" value="ECO:0000250"/>
    <property type="project" value="UniProtKB"/>
</dbReference>
<dbReference type="GO" id="GO:0044752">
    <property type="term" value="P:response to human chorionic gonadotropin"/>
    <property type="evidence" value="ECO:0000270"/>
    <property type="project" value="RGD"/>
</dbReference>
<dbReference type="GO" id="GO:0070555">
    <property type="term" value="P:response to interleukin-1"/>
    <property type="evidence" value="ECO:0000270"/>
    <property type="project" value="RGD"/>
</dbReference>
<dbReference type="GO" id="GO:0051409">
    <property type="term" value="P:response to nitrosative stress"/>
    <property type="evidence" value="ECO:0000315"/>
    <property type="project" value="RGD"/>
</dbReference>
<dbReference type="GO" id="GO:0007584">
    <property type="term" value="P:response to nutrient"/>
    <property type="evidence" value="ECO:0000270"/>
    <property type="project" value="RGD"/>
</dbReference>
<dbReference type="GO" id="GO:0006979">
    <property type="term" value="P:response to oxidative stress"/>
    <property type="evidence" value="ECO:0000315"/>
    <property type="project" value="RGD"/>
</dbReference>
<dbReference type="GO" id="GO:0009410">
    <property type="term" value="P:response to xenobiotic stimulus"/>
    <property type="evidence" value="ECO:0000266"/>
    <property type="project" value="RGD"/>
</dbReference>
<dbReference type="FunFam" id="1.10.8.960:FF:000001">
    <property type="entry name" value="Glutamate--cysteine ligase catalytic subunit"/>
    <property type="match status" value="1"/>
</dbReference>
<dbReference type="FunFam" id="3.30.590.50:FF:000002">
    <property type="entry name" value="Glutamate--cysteine ligase catalytic subunit"/>
    <property type="match status" value="1"/>
</dbReference>
<dbReference type="FunFam" id="3.30.590.50:FF:000003">
    <property type="entry name" value="Glutamate--cysteine ligase catalytic subunit"/>
    <property type="match status" value="1"/>
</dbReference>
<dbReference type="Gene3D" id="1.10.8.960">
    <property type="match status" value="1"/>
</dbReference>
<dbReference type="Gene3D" id="3.30.590.50">
    <property type="match status" value="2"/>
</dbReference>
<dbReference type="InterPro" id="IPR004308">
    <property type="entry name" value="GCS"/>
</dbReference>
<dbReference type="InterPro" id="IPR014746">
    <property type="entry name" value="Gln_synth/guanido_kin_cat_dom"/>
</dbReference>
<dbReference type="PANTHER" id="PTHR11164">
    <property type="entry name" value="GLUTAMATE CYSTEINE LIGASE"/>
    <property type="match status" value="1"/>
</dbReference>
<dbReference type="PANTHER" id="PTHR11164:SF0">
    <property type="entry name" value="GLUTAMATE--CYSTEINE LIGASE CATALYTIC SUBUNIT"/>
    <property type="match status" value="1"/>
</dbReference>
<dbReference type="Pfam" id="PF03074">
    <property type="entry name" value="GCS"/>
    <property type="match status" value="1"/>
</dbReference>
<dbReference type="SUPFAM" id="SSF55931">
    <property type="entry name" value="Glutamine synthetase/guanido kinase"/>
    <property type="match status" value="1"/>
</dbReference>
<reference key="1">
    <citation type="journal article" date="1990" name="J. Biol. Chem.">
        <title>Amino acid sequence of rat kidney gamma-glutamylcysteine synthetase.</title>
        <authorList>
            <person name="Yan N."/>
            <person name="Meister A."/>
        </authorList>
    </citation>
    <scope>NUCLEOTIDE SEQUENCE [MRNA]</scope>
    <scope>PARTIAL PROTEIN SEQUENCE</scope>
    <source>
        <tissue>Kidney</tissue>
    </source>
</reference>
<reference key="2">
    <citation type="journal article" date="2004" name="Genome Res.">
        <title>The status, quality, and expansion of the NIH full-length cDNA project: the Mammalian Gene Collection (MGC).</title>
        <authorList>
            <consortium name="The MGC Project Team"/>
        </authorList>
    </citation>
    <scope>NUCLEOTIDE SEQUENCE [LARGE SCALE MRNA]</scope>
    <source>
        <tissue>Kidney</tissue>
    </source>
</reference>
<reference key="3">
    <citation type="journal article" date="2012" name="Nat. Commun.">
        <title>Quantitative maps of protein phosphorylation sites across 14 different rat organs and tissues.</title>
        <authorList>
            <person name="Lundby A."/>
            <person name="Secher A."/>
            <person name="Lage K."/>
            <person name="Nordsborg N.B."/>
            <person name="Dmytriyev A."/>
            <person name="Lundby C."/>
            <person name="Olsen J.V."/>
        </authorList>
    </citation>
    <scope>PHOSPHORYLATION [LARGE SCALE ANALYSIS] AT SER-5 AND SER-8</scope>
    <scope>IDENTIFICATION BY MASS SPECTROMETRY [LARGE SCALE ANALYSIS]</scope>
</reference>
<name>GSH1_RAT</name>
<accession>P19468</accession>
<protein>
    <recommendedName>
        <fullName evidence="2">Glutamate--cysteine ligase catalytic subunit</fullName>
        <ecNumber evidence="1">6.3.2.2</ecNumber>
    </recommendedName>
    <alternativeName>
        <fullName>GCS heavy chain</fullName>
    </alternativeName>
    <alternativeName>
        <fullName>Gamma-ECS</fullName>
    </alternativeName>
    <alternativeName>
        <fullName>Gamma-glutamylcysteine synthetase</fullName>
    </alternativeName>
</protein>
<feature type="chain" id="PRO_0000192565" description="Glutamate--cysteine ligase catalytic subunit">
    <location>
        <begin position="1"/>
        <end position="637"/>
    </location>
</feature>
<feature type="modified residue" description="N-acetylmethionine" evidence="1">
    <location>
        <position position="1"/>
    </location>
</feature>
<feature type="modified residue" description="Phosphoserine" evidence="4">
    <location>
        <position position="5"/>
    </location>
</feature>
<feature type="modified residue" description="Phosphoserine" evidence="4">
    <location>
        <position position="8"/>
    </location>
</feature>
<gene>
    <name evidence="3" type="primary">Gclc</name>
    <name type="synonym">Glclc</name>
</gene>
<keyword id="KW-0007">Acetylation</keyword>
<keyword id="KW-0067">ATP-binding</keyword>
<keyword id="KW-0903">Direct protein sequencing</keyword>
<keyword id="KW-0317">Glutathione biosynthesis</keyword>
<keyword id="KW-0436">Ligase</keyword>
<keyword id="KW-0547">Nucleotide-binding</keyword>
<keyword id="KW-0597">Phosphoprotein</keyword>
<keyword id="KW-1185">Reference proteome</keyword>
<evidence type="ECO:0000250" key="1">
    <source>
        <dbReference type="UniProtKB" id="P48506"/>
    </source>
</evidence>
<evidence type="ECO:0000305" key="2"/>
<evidence type="ECO:0000312" key="3">
    <source>
        <dbReference type="RGD" id="619868"/>
    </source>
</evidence>
<evidence type="ECO:0007744" key="4">
    <source>
    </source>
</evidence>
<organism>
    <name type="scientific">Rattus norvegicus</name>
    <name type="common">Rat</name>
    <dbReference type="NCBI Taxonomy" id="10116"/>
    <lineage>
        <taxon>Eukaryota</taxon>
        <taxon>Metazoa</taxon>
        <taxon>Chordata</taxon>
        <taxon>Craniata</taxon>
        <taxon>Vertebrata</taxon>
        <taxon>Euteleostomi</taxon>
        <taxon>Mammalia</taxon>
        <taxon>Eutheria</taxon>
        <taxon>Euarchontoglires</taxon>
        <taxon>Glires</taxon>
        <taxon>Rodentia</taxon>
        <taxon>Myomorpha</taxon>
        <taxon>Muroidea</taxon>
        <taxon>Muridae</taxon>
        <taxon>Murinae</taxon>
        <taxon>Rattus</taxon>
    </lineage>
</organism>
<proteinExistence type="evidence at protein level"/>
<sequence length="637" mass="72619">MGLLSQGSPLSWEETQRHADHVRRHGILQFLHIYHAVKDRHKDVLKWGDEVEYMLVSFDHENRKVQLLLNGGDVLETLQEKGERTNPNHPTLWRPEYGSYMIEGTPGQPYGGTMSEFNTVEDNMRKRRKEATSVLGEHQALCTITSFPRLGCPGFTLPEHRPNPEEGGASKSLFFPDEAINKHPRFGTLTRNIRHRRGEKVVINVPIFKDKNTPSPFVETFPEDEEASKASKPDHIYMDAMGFGMGNCCLQVTFQACSISEARYLYDQLATICPIVMALSAASPFYRGYVSDIDCRWGVISASVDDRTREERGLEPLKNNRFKISKSRYDSIDSYLSKCGEKYNDIDLTIDTEIYEQLLEEGIDHLLAQHVAHLFIRDPLTLFEEKIHLDDANESDHFENIQSTNWQTMRFKPPPPNSDIGWRVEFRPMEVQLTDFENSAYVVFVVLLTRVILSYKLDFLIPLSKVDENMKVAQERDAVLQGMFYFRKDICKGGNAVVDGCSKAQTSSEPSAEEYTLMSIDTIINGKEGVFPGLIPILNSYLENMEVDVDTRCSILNYLKLIKKRASGELMTVARWMREFIANHPDYKQDSVITDEINYSLILKCNQIANELCECPELLGSGFRKAKYSGGKSDPSD</sequence>